<reference key="1">
    <citation type="journal article" date="2005" name="Nature">
        <title>Generation and annotation of the DNA sequences of human chromosomes 2 and 4.</title>
        <authorList>
            <person name="Hillier L.W."/>
            <person name="Graves T.A."/>
            <person name="Fulton R.S."/>
            <person name="Fulton L.A."/>
            <person name="Pepin K.H."/>
            <person name="Minx P."/>
            <person name="Wagner-McPherson C."/>
            <person name="Layman D."/>
            <person name="Wylie K."/>
            <person name="Sekhon M."/>
            <person name="Becker M.C."/>
            <person name="Fewell G.A."/>
            <person name="Delehaunty K.D."/>
            <person name="Miner T.L."/>
            <person name="Nash W.E."/>
            <person name="Kremitzki C."/>
            <person name="Oddy L."/>
            <person name="Du H."/>
            <person name="Sun H."/>
            <person name="Bradshaw-Cordum H."/>
            <person name="Ali J."/>
            <person name="Carter J."/>
            <person name="Cordes M."/>
            <person name="Harris A."/>
            <person name="Isak A."/>
            <person name="van Brunt A."/>
            <person name="Nguyen C."/>
            <person name="Du F."/>
            <person name="Courtney L."/>
            <person name="Kalicki J."/>
            <person name="Ozersky P."/>
            <person name="Abbott S."/>
            <person name="Armstrong J."/>
            <person name="Belter E.A."/>
            <person name="Caruso L."/>
            <person name="Cedroni M."/>
            <person name="Cotton M."/>
            <person name="Davidson T."/>
            <person name="Desai A."/>
            <person name="Elliott G."/>
            <person name="Erb T."/>
            <person name="Fronick C."/>
            <person name="Gaige T."/>
            <person name="Haakenson W."/>
            <person name="Haglund K."/>
            <person name="Holmes A."/>
            <person name="Harkins R."/>
            <person name="Kim K."/>
            <person name="Kruchowski S.S."/>
            <person name="Strong C.M."/>
            <person name="Grewal N."/>
            <person name="Goyea E."/>
            <person name="Hou S."/>
            <person name="Levy A."/>
            <person name="Martinka S."/>
            <person name="Mead K."/>
            <person name="McLellan M.D."/>
            <person name="Meyer R."/>
            <person name="Randall-Maher J."/>
            <person name="Tomlinson C."/>
            <person name="Dauphin-Kohlberg S."/>
            <person name="Kozlowicz-Reilly A."/>
            <person name="Shah N."/>
            <person name="Swearengen-Shahid S."/>
            <person name="Snider J."/>
            <person name="Strong J.T."/>
            <person name="Thompson J."/>
            <person name="Yoakum M."/>
            <person name="Leonard S."/>
            <person name="Pearman C."/>
            <person name="Trani L."/>
            <person name="Radionenko M."/>
            <person name="Waligorski J.E."/>
            <person name="Wang C."/>
            <person name="Rock S.M."/>
            <person name="Tin-Wollam A.-M."/>
            <person name="Maupin R."/>
            <person name="Latreille P."/>
            <person name="Wendl M.C."/>
            <person name="Yang S.-P."/>
            <person name="Pohl C."/>
            <person name="Wallis J.W."/>
            <person name="Spieth J."/>
            <person name="Bieri T.A."/>
            <person name="Berkowicz N."/>
            <person name="Nelson J.O."/>
            <person name="Osborne J."/>
            <person name="Ding L."/>
            <person name="Meyer R."/>
            <person name="Sabo A."/>
            <person name="Shotland Y."/>
            <person name="Sinha P."/>
            <person name="Wohldmann P.E."/>
            <person name="Cook L.L."/>
            <person name="Hickenbotham M.T."/>
            <person name="Eldred J."/>
            <person name="Williams D."/>
            <person name="Jones T.A."/>
            <person name="She X."/>
            <person name="Ciccarelli F.D."/>
            <person name="Izaurralde E."/>
            <person name="Taylor J."/>
            <person name="Schmutz J."/>
            <person name="Myers R.M."/>
            <person name="Cox D.R."/>
            <person name="Huang X."/>
            <person name="McPherson J.D."/>
            <person name="Mardis E.R."/>
            <person name="Clifton S.W."/>
            <person name="Warren W.C."/>
            <person name="Chinwalla A.T."/>
            <person name="Eddy S.R."/>
            <person name="Marra M.A."/>
            <person name="Ovcharenko I."/>
            <person name="Furey T.S."/>
            <person name="Miller W."/>
            <person name="Eichler E.E."/>
            <person name="Bork P."/>
            <person name="Suyama M."/>
            <person name="Torrents D."/>
            <person name="Waterston R.H."/>
            <person name="Wilson R.K."/>
        </authorList>
    </citation>
    <scope>NUCLEOTIDE SEQUENCE [LARGE SCALE GENOMIC DNA]</scope>
</reference>
<reference key="2">
    <citation type="journal article" date="2004" name="Nat. Biotechnol.">
        <title>Transcriptome characterization elucidates signaling networks that control human ES cell growth and differentiation.</title>
        <authorList>
            <person name="Brandenberger R."/>
            <person name="Wei H."/>
            <person name="Zhang S."/>
            <person name="Lei S."/>
            <person name="Murage J."/>
            <person name="Fisk G.J."/>
            <person name="Li Y."/>
            <person name="Xu C."/>
            <person name="Fang R."/>
            <person name="Guegler K."/>
            <person name="Rao M.S."/>
            <person name="Mandalam R."/>
            <person name="Lebkowski J."/>
            <person name="Stanton L.W."/>
        </authorList>
    </citation>
    <scope>NUCLEOTIDE SEQUENCE [MRNA] OF 1-174</scope>
</reference>
<reference key="3">
    <citation type="journal article" date="2011" name="Am. J. Hum. Genet.">
        <title>Autosomal-recessive posterior microphthalmos is caused by mutations in PRSS56, a gene encoding a trypsin-like serine protease.</title>
        <authorList>
            <person name="Gal A."/>
            <person name="Rau I."/>
            <person name="El Matri L."/>
            <person name="Kreienkamp H.J."/>
            <person name="Fehr S."/>
            <person name="Baklouti K."/>
            <person name="Chouchane I."/>
            <person name="Li Y."/>
            <person name="Rehbein M."/>
            <person name="Fuchs J."/>
            <person name="Fledelius H.C."/>
            <person name="Vilhelmsen K."/>
            <person name="Schorderet D.F."/>
            <person name="Munier F.L."/>
            <person name="Ostergaard E."/>
            <person name="Thompson D.A."/>
            <person name="Rosenberg T."/>
        </authorList>
    </citation>
    <scope>FUNCTION</scope>
    <scope>INVOLVEMENT IN MCOP6</scope>
    <scope>VARIANTS MCOP6 GLY-176 AND SER-309</scope>
    <scope>TISSUE SPECIFICITY</scope>
</reference>
<reference key="4">
    <citation type="journal article" date="2011" name="Mol. Vis.">
        <title>Mutations in a novel serine protease PRSS56 in families with nanophthalmos.</title>
        <authorList>
            <person name="Orr A."/>
            <person name="Dube M.P."/>
            <person name="Zenteno J.C."/>
            <person name="Jiang H."/>
            <person name="Asselin G."/>
            <person name="Evans S.C."/>
            <person name="Caqueret A."/>
            <person name="Lakosha H."/>
            <person name="Letourneau L."/>
            <person name="Marcadier J."/>
            <person name="Matsuoka M."/>
            <person name="Macgillivray C."/>
            <person name="Nightingale M."/>
            <person name="Papillon-Cavanagh S."/>
            <person name="Perry S."/>
            <person name="Provost S."/>
            <person name="Ludman M."/>
            <person name="Guernsey D.L."/>
            <person name="Samuels M.E."/>
        </authorList>
    </citation>
    <scope>VARIANTS MCOP6 ARG-237; PHE-302; ARG-320 AND ARG-395</scope>
</reference>
<reference key="5">
    <citation type="journal article" date="2011" name="Nat. Genet.">
        <title>Alteration of the serine protease PRSS56 causes angle-closure glaucoma in mice and posterior microphthalmia in humans and mice.</title>
        <authorList>
            <person name="Nair K.S."/>
            <person name="Hmani-Aifa M."/>
            <person name="Ali Z."/>
            <person name="Kearney A.L."/>
            <person name="Ben Salem S."/>
            <person name="Macalinao D.G."/>
            <person name="Cosma I.M."/>
            <person name="Bouassida W."/>
            <person name="Hakim B."/>
            <person name="Benzina Z."/>
            <person name="Soto I."/>
            <person name="Soderkvist P."/>
            <person name="Howell G.R."/>
            <person name="Smith R.S."/>
            <person name="Ayadi H."/>
            <person name="John S.W."/>
        </authorList>
    </citation>
    <scope>VARIANT MCOP6 ALA-599</scope>
</reference>
<dbReference type="EC" id="3.4.21.-"/>
<dbReference type="EMBL" id="AC092165">
    <property type="status" value="NOT_ANNOTATED_CDS"/>
    <property type="molecule type" value="Genomic_DNA"/>
</dbReference>
<dbReference type="EMBL" id="CN280933">
    <property type="status" value="NOT_ANNOTATED_CDS"/>
    <property type="molecule type" value="mRNA"/>
</dbReference>
<dbReference type="CCDS" id="CCDS74669.1"/>
<dbReference type="RefSeq" id="NP_001182058.1">
    <property type="nucleotide sequence ID" value="NM_001195129.2"/>
</dbReference>
<dbReference type="SMR" id="P0CW18"/>
<dbReference type="BioGRID" id="571766">
    <property type="interactions" value="15"/>
</dbReference>
<dbReference type="FunCoup" id="P0CW18">
    <property type="interactions" value="345"/>
</dbReference>
<dbReference type="IntAct" id="P0CW18">
    <property type="interactions" value="5"/>
</dbReference>
<dbReference type="STRING" id="9606.ENSP00000479745"/>
<dbReference type="MEROPS" id="S01.514"/>
<dbReference type="GlyCosmos" id="P0CW18">
    <property type="glycosylation" value="1 site, No reported glycans"/>
</dbReference>
<dbReference type="GlyGen" id="P0CW18">
    <property type="glycosylation" value="2 sites, 1 N-linked glycan (1 site), 1 O-linked glycan (1 site)"/>
</dbReference>
<dbReference type="iPTMnet" id="P0CW18"/>
<dbReference type="PhosphoSitePlus" id="P0CW18"/>
<dbReference type="BioMuta" id="PRSS56"/>
<dbReference type="DMDM" id="332319805"/>
<dbReference type="jPOST" id="P0CW18"/>
<dbReference type="MassIVE" id="P0CW18"/>
<dbReference type="PaxDb" id="9606-ENSP00000479745"/>
<dbReference type="PeptideAtlas" id="P0CW18"/>
<dbReference type="ProteomicsDB" id="52517"/>
<dbReference type="Antibodypedia" id="71253">
    <property type="antibodies" value="43 antibodies from 10 providers"/>
</dbReference>
<dbReference type="DNASU" id="646960"/>
<dbReference type="Ensembl" id="ENST00000617714.2">
    <property type="protein sequence ID" value="ENSP00000479745.1"/>
    <property type="gene ID" value="ENSG00000237412.7"/>
</dbReference>
<dbReference type="GeneID" id="646960"/>
<dbReference type="KEGG" id="hsa:646960"/>
<dbReference type="MANE-Select" id="ENST00000617714.2">
    <property type="protein sequence ID" value="ENSP00000479745.1"/>
    <property type="RefSeq nucleotide sequence ID" value="NM_001195129.2"/>
    <property type="RefSeq protein sequence ID" value="NP_001182058.1"/>
</dbReference>
<dbReference type="UCSC" id="uc021vyh.2">
    <property type="organism name" value="human"/>
</dbReference>
<dbReference type="AGR" id="HGNC:39433"/>
<dbReference type="CTD" id="646960"/>
<dbReference type="DisGeNET" id="646960"/>
<dbReference type="GeneCards" id="PRSS56"/>
<dbReference type="HGNC" id="HGNC:39433">
    <property type="gene designation" value="PRSS56"/>
</dbReference>
<dbReference type="HPA" id="ENSG00000237412">
    <property type="expression patterns" value="Group enriched (retina, skeletal muscle)"/>
</dbReference>
<dbReference type="MalaCards" id="PRSS56"/>
<dbReference type="MIM" id="613517">
    <property type="type" value="phenotype"/>
</dbReference>
<dbReference type="MIM" id="613858">
    <property type="type" value="gene"/>
</dbReference>
<dbReference type="neXtProt" id="NX_P0CW18"/>
<dbReference type="OpenTargets" id="ENSG00000237412"/>
<dbReference type="Orphanet" id="35612">
    <property type="disease" value="Nanophthalmos"/>
</dbReference>
<dbReference type="VEuPathDB" id="HostDB:ENSG00000237412"/>
<dbReference type="eggNOG" id="KOG3627">
    <property type="taxonomic scope" value="Eukaryota"/>
</dbReference>
<dbReference type="GeneTree" id="ENSGT00940000157183"/>
<dbReference type="HOGENOM" id="CLU_034171_0_0_1"/>
<dbReference type="InParanoid" id="P0CW18"/>
<dbReference type="OMA" id="VMEIQHR"/>
<dbReference type="OrthoDB" id="6380398at2759"/>
<dbReference type="PAN-GO" id="P0CW18">
    <property type="GO annotations" value="3 GO annotations based on evolutionary models"/>
</dbReference>
<dbReference type="PathwayCommons" id="P0CW18"/>
<dbReference type="SignaLink" id="P0CW18"/>
<dbReference type="BioGRID-ORCS" id="646960">
    <property type="hits" value="11 hits in 383 CRISPR screens"/>
</dbReference>
<dbReference type="GenomeRNAi" id="646960"/>
<dbReference type="Pharos" id="P0CW18">
    <property type="development level" value="Tbio"/>
</dbReference>
<dbReference type="PRO" id="PR:P0CW18"/>
<dbReference type="Proteomes" id="UP000005640">
    <property type="component" value="Chromosome 2"/>
</dbReference>
<dbReference type="RNAct" id="P0CW18">
    <property type="molecule type" value="protein"/>
</dbReference>
<dbReference type="Bgee" id="ENSG00000237412">
    <property type="expression patterns" value="Expressed in hindlimb stylopod muscle and 34 other cell types or tissues"/>
</dbReference>
<dbReference type="GO" id="GO:0005783">
    <property type="term" value="C:endoplasmic reticulum"/>
    <property type="evidence" value="ECO:0000250"/>
    <property type="project" value="UniProtKB"/>
</dbReference>
<dbReference type="GO" id="GO:0005615">
    <property type="term" value="C:extracellular space"/>
    <property type="evidence" value="ECO:0000318"/>
    <property type="project" value="GO_Central"/>
</dbReference>
<dbReference type="GO" id="GO:0004252">
    <property type="term" value="F:serine-type endopeptidase activity"/>
    <property type="evidence" value="ECO:0000250"/>
    <property type="project" value="UniProtKB"/>
</dbReference>
<dbReference type="GO" id="GO:0007596">
    <property type="term" value="P:blood coagulation"/>
    <property type="evidence" value="ECO:0000318"/>
    <property type="project" value="GO_Central"/>
</dbReference>
<dbReference type="GO" id="GO:0043010">
    <property type="term" value="P:camera-type eye development"/>
    <property type="evidence" value="ECO:0000315"/>
    <property type="project" value="UniProtKB"/>
</dbReference>
<dbReference type="GO" id="GO:0006508">
    <property type="term" value="P:proteolysis"/>
    <property type="evidence" value="ECO:0000250"/>
    <property type="project" value="UniProtKB"/>
</dbReference>
<dbReference type="CDD" id="cd00190">
    <property type="entry name" value="Tryp_SPc"/>
    <property type="match status" value="1"/>
</dbReference>
<dbReference type="FunFam" id="2.40.10.10:FF:000081">
    <property type="entry name" value="Serine protease 56"/>
    <property type="match status" value="1"/>
</dbReference>
<dbReference type="Gene3D" id="2.40.10.10">
    <property type="entry name" value="Trypsin-like serine proteases"/>
    <property type="match status" value="1"/>
</dbReference>
<dbReference type="InterPro" id="IPR009003">
    <property type="entry name" value="Peptidase_S1_PA"/>
</dbReference>
<dbReference type="InterPro" id="IPR043504">
    <property type="entry name" value="Peptidase_S1_PA_chymotrypsin"/>
</dbReference>
<dbReference type="InterPro" id="IPR001314">
    <property type="entry name" value="Peptidase_S1A"/>
</dbReference>
<dbReference type="InterPro" id="IPR001254">
    <property type="entry name" value="Trypsin_dom"/>
</dbReference>
<dbReference type="InterPro" id="IPR018114">
    <property type="entry name" value="TRYPSIN_HIS"/>
</dbReference>
<dbReference type="InterPro" id="IPR033116">
    <property type="entry name" value="TRYPSIN_SER"/>
</dbReference>
<dbReference type="PANTHER" id="PTHR24252">
    <property type="entry name" value="ACROSIN-RELATED"/>
    <property type="match status" value="1"/>
</dbReference>
<dbReference type="PANTHER" id="PTHR24252:SF10">
    <property type="entry name" value="SERINE PROTEASE 56"/>
    <property type="match status" value="1"/>
</dbReference>
<dbReference type="Pfam" id="PF00089">
    <property type="entry name" value="Trypsin"/>
    <property type="match status" value="1"/>
</dbReference>
<dbReference type="PRINTS" id="PR00722">
    <property type="entry name" value="CHYMOTRYPSIN"/>
</dbReference>
<dbReference type="SMART" id="SM00020">
    <property type="entry name" value="Tryp_SPc"/>
    <property type="match status" value="1"/>
</dbReference>
<dbReference type="SUPFAM" id="SSF50494">
    <property type="entry name" value="Trypsin-like serine proteases"/>
    <property type="match status" value="1"/>
</dbReference>
<dbReference type="PROSITE" id="PS50240">
    <property type="entry name" value="TRYPSIN_DOM"/>
    <property type="match status" value="1"/>
</dbReference>
<dbReference type="PROSITE" id="PS00134">
    <property type="entry name" value="TRYPSIN_HIS"/>
    <property type="match status" value="1"/>
</dbReference>
<dbReference type="PROSITE" id="PS00135">
    <property type="entry name" value="TRYPSIN_SER"/>
    <property type="match status" value="1"/>
</dbReference>
<protein>
    <recommendedName>
        <fullName>Serine protease 56</fullName>
        <ecNumber>3.4.21.-</ecNumber>
    </recommendedName>
</protein>
<comment type="function">
    <text evidence="5">Serine protease required during eye development.</text>
</comment>
<comment type="tissue specificity">
    <text evidence="5">Expressed neural retina, cornea, sclera and optic nerve.</text>
</comment>
<comment type="disease" evidence="5 6 7">
    <disease id="DI-02986">
        <name>Microphthalmia, isolated, 6</name>
        <acronym>MCOP6</acronym>
        <description>A developmental ocular disorder characterized by small malformed eyes. Clinical features are extreme hyperopia due to short axial length with essentially normal anterior segment, steep corneal curvatures, shallow anterior chamber, thick lenses, and thickened scleral wall. Palpebral fissures appear narrow because of relatively deep-set eyes, visual acuity is mildly to moderately reduced, and anisometropic or strabismic amblyopia is common. The fundus of the eye shows crowded optical disks, tortuous vessels, and an abnormal foveal avascular zone.</description>
        <dbReference type="MIM" id="613517"/>
    </disease>
    <text>The disease is caused by variants affecting the gene represented in this entry.</text>
</comment>
<comment type="similarity">
    <text evidence="3">Belongs to the peptidase S1 family.</text>
</comment>
<accession>P0CW18</accession>
<name>PRS56_HUMAN</name>
<keyword id="KW-0225">Disease variant</keyword>
<keyword id="KW-1015">Disulfide bond</keyword>
<keyword id="KW-0325">Glycoprotein</keyword>
<keyword id="KW-0378">Hydrolase</keyword>
<keyword id="KW-1013">Microphthalmia</keyword>
<keyword id="KW-0645">Protease</keyword>
<keyword id="KW-1267">Proteomics identification</keyword>
<keyword id="KW-1185">Reference proteome</keyword>
<keyword id="KW-0720">Serine protease</keyword>
<keyword id="KW-0732">Signal</keyword>
<feature type="signal peptide" evidence="2">
    <location>
        <begin position="1"/>
        <end position="19"/>
    </location>
</feature>
<feature type="chain" id="PRO_0000408091" description="Serine protease 56">
    <location>
        <begin position="20"/>
        <end position="603"/>
    </location>
</feature>
<feature type="domain" description="Peptidase S1" evidence="3">
    <location>
        <begin position="105"/>
        <end position="337"/>
    </location>
</feature>
<feature type="region of interest" description="Disordered" evidence="4">
    <location>
        <begin position="64"/>
        <end position="96"/>
    </location>
</feature>
<feature type="region of interest" description="Disordered" evidence="4">
    <location>
        <begin position="442"/>
        <end position="474"/>
    </location>
</feature>
<feature type="region of interest" description="Disordered" evidence="4">
    <location>
        <begin position="573"/>
        <end position="603"/>
    </location>
</feature>
<feature type="active site" description="Charge relay system" evidence="1">
    <location>
        <position position="145"/>
    </location>
</feature>
<feature type="active site" description="Charge relay system" evidence="1">
    <location>
        <position position="191"/>
    </location>
</feature>
<feature type="active site" description="Charge relay system" evidence="1">
    <location>
        <position position="286"/>
    </location>
</feature>
<feature type="glycosylation site" description="N-linked (GlcNAc...) asparagine" evidence="2">
    <location>
        <position position="97"/>
    </location>
</feature>
<feature type="disulfide bond" evidence="3">
    <location>
        <begin position="130"/>
        <end position="146"/>
    </location>
</feature>
<feature type="disulfide bond" evidence="3">
    <location>
        <begin position="225"/>
        <end position="292"/>
    </location>
</feature>
<feature type="disulfide bond" evidence="3">
    <location>
        <begin position="256"/>
        <end position="271"/>
    </location>
</feature>
<feature type="disulfide bond" evidence="3">
    <location>
        <begin position="282"/>
        <end position="313"/>
    </location>
</feature>
<feature type="sequence variant" id="VAR_065076" description="In MCOP6; dbSNP:rs387907096." evidence="5">
    <original>R</original>
    <variation>G</variation>
    <location>
        <position position="176"/>
    </location>
</feature>
<feature type="sequence variant" id="VAR_069226" description="In MCOP6; dbSNP:rs730882160." evidence="7">
    <original>G</original>
    <variation>R</variation>
    <location>
        <position position="237"/>
    </location>
</feature>
<feature type="sequence variant" id="VAR_069227" description="In MCOP6; dbSNP:rs74703359." evidence="7">
    <original>V</original>
    <variation>F</variation>
    <location>
        <position position="302"/>
    </location>
</feature>
<feature type="sequence variant" id="VAR_065077" description="In MCOP6; dbSNP:rs387907095." evidence="5">
    <original>W</original>
    <variation>S</variation>
    <location>
        <position position="309"/>
    </location>
</feature>
<feature type="sequence variant" id="VAR_069228" description="In MCOP6; dbSNP:rs730882158." evidence="7">
    <original>G</original>
    <variation>R</variation>
    <location>
        <position position="320"/>
    </location>
</feature>
<feature type="sequence variant" id="VAR_069229" description="In MCOP6; dbSNP:rs730882161." evidence="7">
    <original>C</original>
    <variation>R</variation>
    <location>
        <position position="395"/>
    </location>
</feature>
<feature type="sequence variant" id="VAR_069230" description="In MCOP6; dbSNP:rs61744404." evidence="6">
    <original>P</original>
    <variation>A</variation>
    <location>
        <position position="599"/>
    </location>
</feature>
<feature type="sequence conflict" description="In Ref. 2; CN280933." evidence="8" ref="2">
    <original>E</original>
    <variation>K</variation>
    <location>
        <position position="162"/>
    </location>
</feature>
<evidence type="ECO:0000250" key="1"/>
<evidence type="ECO:0000255" key="2"/>
<evidence type="ECO:0000255" key="3">
    <source>
        <dbReference type="PROSITE-ProRule" id="PRU00274"/>
    </source>
</evidence>
<evidence type="ECO:0000256" key="4">
    <source>
        <dbReference type="SAM" id="MobiDB-lite"/>
    </source>
</evidence>
<evidence type="ECO:0000269" key="5">
    <source>
    </source>
</evidence>
<evidence type="ECO:0000269" key="6">
    <source>
    </source>
</evidence>
<evidence type="ECO:0000269" key="7">
    <source>
    </source>
</evidence>
<evidence type="ECO:0000305" key="8"/>
<proteinExistence type="evidence at protein level"/>
<sequence length="603" mass="64597">MLLAVLLLLPLPSSWFAHGHPLYTRLPPSALQVLSAQGTQALQAAQRSAQWAINRVAMEIQHRSHECRGSGRPRPQALLQDPPEPGPCGERRPSTANVTRAHGRIVGGSAAPPGAWPWLVRLQLGGQPLCGGVLVAASWVLTAAHCFVGAPNELLWTVTLAEGSRGEQAEEVPVNRILPHPKFDPRTFHNDLALVQLWTPVSPGGSARPVCLPQEPQEPPAGTACAIAGWGALFEDGPEAEAVREARVPLLSTDTCRRALGPGLRPSTMLCAGYLAGGVDSCQGDSGGPLTCSEPGPRPREVLFGVTSWGDGCGEPGKPGVYTRVAVFKDWLQEQMSASSSREPSCRELLAWDPPQELQADAARLCAFYARLCPGSQGACARLAHQQCLQRRRRCELRSLAHTLLGLLRNAQELLGPRPGLRRLAPALALPAPALRESPLHPARELRLHSGSRAAGTRFPKRRPEPRGEANGCPGLEPLRQKLAALQGAHAWILQVPSEHLAMNFHEVLADLGSKTLTGLFRAWVRAGLGGRHVAFSGLVGLEPATLARSLPRLLVQALQAFRVAALAEGEPEGPWMDVGQGPGLERKGHHPLNPQVPPARQP</sequence>
<gene>
    <name type="primary">PRSS56</name>
</gene>
<organism>
    <name type="scientific">Homo sapiens</name>
    <name type="common">Human</name>
    <dbReference type="NCBI Taxonomy" id="9606"/>
    <lineage>
        <taxon>Eukaryota</taxon>
        <taxon>Metazoa</taxon>
        <taxon>Chordata</taxon>
        <taxon>Craniata</taxon>
        <taxon>Vertebrata</taxon>
        <taxon>Euteleostomi</taxon>
        <taxon>Mammalia</taxon>
        <taxon>Eutheria</taxon>
        <taxon>Euarchontoglires</taxon>
        <taxon>Primates</taxon>
        <taxon>Haplorrhini</taxon>
        <taxon>Catarrhini</taxon>
        <taxon>Hominidae</taxon>
        <taxon>Homo</taxon>
    </lineage>
</organism>